<comment type="function">
    <text evidence="1">Covalently attaches a chromophore to Cys residue(s) of phycobiliproteins.</text>
</comment>
<comment type="similarity">
    <text evidence="1">Belongs to the CpcT/CpeT biliprotein lyase family.</text>
</comment>
<dbReference type="EC" id="4.-.-.-" evidence="1"/>
<dbReference type="EMBL" id="BA000039">
    <property type="protein sequence ID" value="BAC09708.1"/>
    <property type="molecule type" value="Genomic_DNA"/>
</dbReference>
<dbReference type="RefSeq" id="NP_682946.1">
    <property type="nucleotide sequence ID" value="NC_004113.1"/>
</dbReference>
<dbReference type="RefSeq" id="WP_011057990.1">
    <property type="nucleotide sequence ID" value="NC_004113.1"/>
</dbReference>
<dbReference type="SMR" id="Q8DH04"/>
<dbReference type="STRING" id="197221.gene:10748767"/>
<dbReference type="EnsemblBacteria" id="BAC09708">
    <property type="protein sequence ID" value="BAC09708"/>
    <property type="gene ID" value="BAC09708"/>
</dbReference>
<dbReference type="KEGG" id="tel:tlr2156"/>
<dbReference type="PATRIC" id="fig|197221.4.peg.2259"/>
<dbReference type="eggNOG" id="ENOG502Z877">
    <property type="taxonomic scope" value="Bacteria"/>
</dbReference>
<dbReference type="Proteomes" id="UP000000440">
    <property type="component" value="Chromosome"/>
</dbReference>
<dbReference type="GO" id="GO:0016829">
    <property type="term" value="F:lyase activity"/>
    <property type="evidence" value="ECO:0007669"/>
    <property type="project" value="UniProtKB-KW"/>
</dbReference>
<dbReference type="CDD" id="cd16338">
    <property type="entry name" value="CpcT"/>
    <property type="match status" value="1"/>
</dbReference>
<dbReference type="Gene3D" id="2.40.128.590">
    <property type="entry name" value="CpcT/CpeT domain"/>
    <property type="match status" value="1"/>
</dbReference>
<dbReference type="HAMAP" id="MF_01460">
    <property type="entry name" value="Chrphore_lyase_CpxT"/>
    <property type="match status" value="1"/>
</dbReference>
<dbReference type="InterPro" id="IPR010404">
    <property type="entry name" value="CpcT/CpeT"/>
</dbReference>
<dbReference type="InterPro" id="IPR038672">
    <property type="entry name" value="CpcT/CpeT_sf"/>
</dbReference>
<dbReference type="PANTHER" id="PTHR35137">
    <property type="entry name" value="CHROMOPHORE LYASE CRL, CHLOROPLASTIC"/>
    <property type="match status" value="1"/>
</dbReference>
<dbReference type="PANTHER" id="PTHR35137:SF1">
    <property type="entry name" value="CHROMOPHORE LYASE CRL, CHLOROPLASTIC"/>
    <property type="match status" value="1"/>
</dbReference>
<dbReference type="Pfam" id="PF06206">
    <property type="entry name" value="CpeT"/>
    <property type="match status" value="1"/>
</dbReference>
<feature type="chain" id="PRO_0000403168" description="Chromophore lyase CpcT/CpeT">
    <location>
        <begin position="1"/>
        <end position="196"/>
    </location>
</feature>
<protein>
    <recommendedName>
        <fullName evidence="1">Chromophore lyase CpcT/CpeT</fullName>
        <ecNumber evidence="1">4.-.-.-</ecNumber>
    </recommendedName>
</protein>
<name>CPXT_THEVB</name>
<proteinExistence type="inferred from homology"/>
<sequence length="196" mass="22568">MTHATDVLTLGRWMAADFSNQAQAFENPPFYAHIRVCMRPLPRGVLEGIALYVEQAYDYLLSVPYRTRVLELMPANDHIVIKNYVLKDEKRFFGAARDRQRLQAMTADDLELLCGCNMLTYWTGHSFRGEVEPGKACKVVRKGRETYLDSTFEIDGDRFISHDRGRDPETDEHVWGSVAGPFHFVRWQSFADEVMA</sequence>
<reference key="1">
    <citation type="journal article" date="2002" name="DNA Res.">
        <title>Complete genome structure of the thermophilic cyanobacterium Thermosynechococcus elongatus BP-1.</title>
        <authorList>
            <person name="Nakamura Y."/>
            <person name="Kaneko T."/>
            <person name="Sato S."/>
            <person name="Ikeuchi M."/>
            <person name="Katoh H."/>
            <person name="Sasamoto S."/>
            <person name="Watanabe A."/>
            <person name="Iriguchi M."/>
            <person name="Kawashima K."/>
            <person name="Kimura T."/>
            <person name="Kishida Y."/>
            <person name="Kiyokawa C."/>
            <person name="Kohara M."/>
            <person name="Matsumoto M."/>
            <person name="Matsuno A."/>
            <person name="Nakazaki N."/>
            <person name="Shimpo S."/>
            <person name="Sugimoto M."/>
            <person name="Takeuchi C."/>
            <person name="Yamada M."/>
            <person name="Tabata S."/>
        </authorList>
    </citation>
    <scope>NUCLEOTIDE SEQUENCE [LARGE SCALE GENOMIC DNA]</scope>
    <source>
        <strain>NIES-2133 / IAM M-273 / BP-1</strain>
    </source>
</reference>
<gene>
    <name evidence="1" type="primary">cpcT</name>
    <name type="ordered locus">tlr2156</name>
</gene>
<accession>Q8DH04</accession>
<keyword id="KW-0456">Lyase</keyword>
<keyword id="KW-1185">Reference proteome</keyword>
<organism>
    <name type="scientific">Thermosynechococcus vestitus (strain NIES-2133 / IAM M-273 / BP-1)</name>
    <dbReference type="NCBI Taxonomy" id="197221"/>
    <lineage>
        <taxon>Bacteria</taxon>
        <taxon>Bacillati</taxon>
        <taxon>Cyanobacteriota</taxon>
        <taxon>Cyanophyceae</taxon>
        <taxon>Acaryochloridales</taxon>
        <taxon>Thermosynechococcaceae</taxon>
        <taxon>Thermosynechococcus</taxon>
    </lineage>
</organism>
<evidence type="ECO:0000255" key="1">
    <source>
        <dbReference type="HAMAP-Rule" id="MF_01460"/>
    </source>
</evidence>